<accession>Q3YEE4</accession>
<protein>
    <recommendedName>
        <fullName>Conotoxin MiEr93</fullName>
    </recommendedName>
</protein>
<sequence length="74" mass="8025">MKLTCVLIIAVLFLTAYQLATAASYAKGKQKHRALRPADKHLRLTKRCNDRGGGCSQHPHCCGGTCNKLIGVCL</sequence>
<feature type="signal peptide" evidence="2">
    <location>
        <begin position="1"/>
        <end position="22"/>
    </location>
</feature>
<feature type="propeptide" id="PRO_0000273435" evidence="1">
    <location>
        <begin position="23"/>
        <end position="45"/>
    </location>
</feature>
<feature type="peptide" id="PRO_0000273436" description="Conotoxin MiEr93">
    <location>
        <begin position="48"/>
        <end position="74"/>
    </location>
</feature>
<feature type="disulfide bond" evidence="1">
    <location>
        <begin position="48"/>
        <end position="62"/>
    </location>
</feature>
<feature type="disulfide bond" evidence="1">
    <location>
        <begin position="55"/>
        <end position="66"/>
    </location>
</feature>
<feature type="disulfide bond" evidence="1">
    <location>
        <begin position="61"/>
        <end position="73"/>
    </location>
</feature>
<reference key="1">
    <citation type="journal article" date="2007" name="J. Pept. Sci.">
        <title>Diversity of the O-superfamily conotoxins from Conus miles.</title>
        <authorList>
            <person name="Luo S."/>
            <person name="Zhangsun D."/>
            <person name="Feng J."/>
            <person name="Wu Y."/>
            <person name="Zhu X."/>
            <person name="Hu Y."/>
        </authorList>
    </citation>
    <scope>NUCLEOTIDE SEQUENCE [MRNA]</scope>
    <source>
        <tissue>Venom duct</tissue>
    </source>
</reference>
<name>O169_CONMI</name>
<comment type="subcellular location">
    <subcellularLocation>
        <location evidence="1">Secreted</location>
    </subcellularLocation>
</comment>
<comment type="tissue specificity">
    <text>Expressed by the venom duct.</text>
</comment>
<comment type="domain">
    <text evidence="1">The presence of a 'disulfide through disulfide knot' structurally defines this protein as a knottin.</text>
</comment>
<comment type="domain">
    <text>The cysteine framework is VI/VII (C-C-CC-C-C).</text>
</comment>
<comment type="similarity">
    <text evidence="3">Belongs to the conotoxin O1 superfamily.</text>
</comment>
<proteinExistence type="evidence at transcript level"/>
<evidence type="ECO:0000250" key="1"/>
<evidence type="ECO:0000255" key="2"/>
<evidence type="ECO:0000305" key="3"/>
<organism>
    <name type="scientific">Conus miles</name>
    <name type="common">Soldier cone</name>
    <name type="synonym">Mile cone</name>
    <dbReference type="NCBI Taxonomy" id="69564"/>
    <lineage>
        <taxon>Eukaryota</taxon>
        <taxon>Metazoa</taxon>
        <taxon>Spiralia</taxon>
        <taxon>Lophotrochozoa</taxon>
        <taxon>Mollusca</taxon>
        <taxon>Gastropoda</taxon>
        <taxon>Caenogastropoda</taxon>
        <taxon>Neogastropoda</taxon>
        <taxon>Conoidea</taxon>
        <taxon>Conidae</taxon>
        <taxon>Conus</taxon>
        <taxon>Rhizoconus</taxon>
    </lineage>
</organism>
<dbReference type="EMBL" id="DQ141169">
    <property type="protein sequence ID" value="AAZ83768.1"/>
    <property type="molecule type" value="mRNA"/>
</dbReference>
<dbReference type="SMR" id="Q3YEE4"/>
<dbReference type="ConoServer" id="1123">
    <property type="toxin name" value="MiEr93 precursor"/>
</dbReference>
<dbReference type="GO" id="GO:0005576">
    <property type="term" value="C:extracellular region"/>
    <property type="evidence" value="ECO:0007669"/>
    <property type="project" value="UniProtKB-SubCell"/>
</dbReference>
<dbReference type="GO" id="GO:0008200">
    <property type="term" value="F:ion channel inhibitor activity"/>
    <property type="evidence" value="ECO:0007669"/>
    <property type="project" value="InterPro"/>
</dbReference>
<dbReference type="GO" id="GO:0090729">
    <property type="term" value="F:toxin activity"/>
    <property type="evidence" value="ECO:0007669"/>
    <property type="project" value="UniProtKB-KW"/>
</dbReference>
<dbReference type="InterPro" id="IPR004214">
    <property type="entry name" value="Conotoxin"/>
</dbReference>
<dbReference type="Pfam" id="PF02950">
    <property type="entry name" value="Conotoxin"/>
    <property type="match status" value="1"/>
</dbReference>
<keyword id="KW-0165">Cleavage on pair of basic residues</keyword>
<keyword id="KW-1015">Disulfide bond</keyword>
<keyword id="KW-0960">Knottin</keyword>
<keyword id="KW-0528">Neurotoxin</keyword>
<keyword id="KW-0964">Secreted</keyword>
<keyword id="KW-0732">Signal</keyword>
<keyword id="KW-0800">Toxin</keyword>